<sequence length="146" mass="16295">VHWTAEEKQLITGLWGKVNVADCGAEALARLLIVYPWTQRFFASFGNLSSPTAISGNPMVRAHGKKVLTSFGDAVKNLDNIKNTFSQLSELHCDKLHVDPENFRLLGDILIIVLAAHFTKDFTPDCQAAWQKLVRVVAHALARKYH</sequence>
<protein>
    <recommendedName>
        <fullName>Hemoglobin subunit beta</fullName>
    </recommendedName>
    <alternativeName>
        <fullName>Beta-globin</fullName>
    </alternativeName>
    <alternativeName>
        <fullName>Hemoglobin beta chain</fullName>
    </alternativeName>
</protein>
<proteinExistence type="evidence at protein level"/>
<dbReference type="PIR" id="S00569">
    <property type="entry name" value="HBGSA"/>
</dbReference>
<dbReference type="SMR" id="P07036"/>
<dbReference type="GO" id="GO:0072562">
    <property type="term" value="C:blood microparticle"/>
    <property type="evidence" value="ECO:0007669"/>
    <property type="project" value="TreeGrafter"/>
</dbReference>
<dbReference type="GO" id="GO:0031838">
    <property type="term" value="C:haptoglobin-hemoglobin complex"/>
    <property type="evidence" value="ECO:0007669"/>
    <property type="project" value="TreeGrafter"/>
</dbReference>
<dbReference type="GO" id="GO:0005833">
    <property type="term" value="C:hemoglobin complex"/>
    <property type="evidence" value="ECO:0007669"/>
    <property type="project" value="InterPro"/>
</dbReference>
<dbReference type="GO" id="GO:0031720">
    <property type="term" value="F:haptoglobin binding"/>
    <property type="evidence" value="ECO:0007669"/>
    <property type="project" value="TreeGrafter"/>
</dbReference>
<dbReference type="GO" id="GO:0020037">
    <property type="term" value="F:heme binding"/>
    <property type="evidence" value="ECO:0007669"/>
    <property type="project" value="InterPro"/>
</dbReference>
<dbReference type="GO" id="GO:0046872">
    <property type="term" value="F:metal ion binding"/>
    <property type="evidence" value="ECO:0007669"/>
    <property type="project" value="UniProtKB-KW"/>
</dbReference>
<dbReference type="GO" id="GO:0043177">
    <property type="term" value="F:organic acid binding"/>
    <property type="evidence" value="ECO:0007669"/>
    <property type="project" value="TreeGrafter"/>
</dbReference>
<dbReference type="GO" id="GO:0019825">
    <property type="term" value="F:oxygen binding"/>
    <property type="evidence" value="ECO:0007669"/>
    <property type="project" value="InterPro"/>
</dbReference>
<dbReference type="GO" id="GO:0005344">
    <property type="term" value="F:oxygen carrier activity"/>
    <property type="evidence" value="ECO:0007669"/>
    <property type="project" value="UniProtKB-KW"/>
</dbReference>
<dbReference type="GO" id="GO:0004601">
    <property type="term" value="F:peroxidase activity"/>
    <property type="evidence" value="ECO:0007669"/>
    <property type="project" value="TreeGrafter"/>
</dbReference>
<dbReference type="GO" id="GO:0042744">
    <property type="term" value="P:hydrogen peroxide catabolic process"/>
    <property type="evidence" value="ECO:0007669"/>
    <property type="project" value="TreeGrafter"/>
</dbReference>
<dbReference type="CDD" id="cd08925">
    <property type="entry name" value="Hb-beta-like"/>
    <property type="match status" value="1"/>
</dbReference>
<dbReference type="FunFam" id="1.10.490.10:FF:000001">
    <property type="entry name" value="Hemoglobin subunit beta"/>
    <property type="match status" value="1"/>
</dbReference>
<dbReference type="Gene3D" id="1.10.490.10">
    <property type="entry name" value="Globins"/>
    <property type="match status" value="1"/>
</dbReference>
<dbReference type="InterPro" id="IPR000971">
    <property type="entry name" value="Globin"/>
</dbReference>
<dbReference type="InterPro" id="IPR009050">
    <property type="entry name" value="Globin-like_sf"/>
</dbReference>
<dbReference type="InterPro" id="IPR012292">
    <property type="entry name" value="Globin/Proto"/>
</dbReference>
<dbReference type="InterPro" id="IPR002337">
    <property type="entry name" value="Hemoglobin_b"/>
</dbReference>
<dbReference type="InterPro" id="IPR050056">
    <property type="entry name" value="Hemoglobin_oxygen_transport"/>
</dbReference>
<dbReference type="PANTHER" id="PTHR11442">
    <property type="entry name" value="HEMOGLOBIN FAMILY MEMBER"/>
    <property type="match status" value="1"/>
</dbReference>
<dbReference type="PANTHER" id="PTHR11442:SF7">
    <property type="entry name" value="HEMOGLOBIN SUBUNIT EPSILON"/>
    <property type="match status" value="1"/>
</dbReference>
<dbReference type="Pfam" id="PF00042">
    <property type="entry name" value="Globin"/>
    <property type="match status" value="1"/>
</dbReference>
<dbReference type="PRINTS" id="PR00814">
    <property type="entry name" value="BETAHAEM"/>
</dbReference>
<dbReference type="SUPFAM" id="SSF46458">
    <property type="entry name" value="Globin-like"/>
    <property type="match status" value="1"/>
</dbReference>
<dbReference type="PROSITE" id="PS01033">
    <property type="entry name" value="GLOBIN"/>
    <property type="match status" value="1"/>
</dbReference>
<keyword id="KW-0903">Direct protein sequencing</keyword>
<keyword id="KW-0349">Heme</keyword>
<keyword id="KW-0408">Iron</keyword>
<keyword id="KW-0479">Metal-binding</keyword>
<keyword id="KW-0561">Oxygen transport</keyword>
<keyword id="KW-0813">Transport</keyword>
<reference key="1">
    <citation type="journal article" date="1987" name="Biol. Chem. Hoppe-Seyler">
        <title>The primary structures of the major and minor hemoglobin-components of adult Andean goose (Chloephaga melanoptera, Anatidae): the mutation Leu--&gt;Ser in position 55 of the beta-chains.</title>
        <authorList>
            <person name="Hiebl I."/>
            <person name="Braunitzer G."/>
            <person name="Schneeganss D."/>
        </authorList>
    </citation>
    <scope>PROTEIN SEQUENCE</scope>
</reference>
<feature type="chain" id="PRO_0000052926" description="Hemoglobin subunit beta">
    <location>
        <begin position="1"/>
        <end position="146"/>
    </location>
</feature>
<feature type="domain" description="Globin" evidence="1">
    <location>
        <begin position="2"/>
        <end position="146"/>
    </location>
</feature>
<feature type="binding site" description="distal binding residue">
    <location>
        <position position="63"/>
    </location>
    <ligand>
        <name>heme b</name>
        <dbReference type="ChEBI" id="CHEBI:60344"/>
    </ligand>
    <ligandPart>
        <name>Fe</name>
        <dbReference type="ChEBI" id="CHEBI:18248"/>
    </ligandPart>
</feature>
<feature type="binding site" description="proximal binding residue">
    <location>
        <position position="92"/>
    </location>
    <ligand>
        <name>heme b</name>
        <dbReference type="ChEBI" id="CHEBI:60344"/>
    </ligand>
    <ligandPart>
        <name>Fe</name>
        <dbReference type="ChEBI" id="CHEBI:18248"/>
    </ligandPart>
</feature>
<evidence type="ECO:0000255" key="1">
    <source>
        <dbReference type="PROSITE-ProRule" id="PRU00238"/>
    </source>
</evidence>
<accession>P07036</accession>
<gene>
    <name type="primary">HBB</name>
</gene>
<organism>
    <name type="scientific">Chloephaga melanoptera</name>
    <name type="common">Andean goose</name>
    <name type="synonym">Anser melanopterus</name>
    <dbReference type="NCBI Taxonomy" id="8860"/>
    <lineage>
        <taxon>Eukaryota</taxon>
        <taxon>Metazoa</taxon>
        <taxon>Chordata</taxon>
        <taxon>Craniata</taxon>
        <taxon>Vertebrata</taxon>
        <taxon>Euteleostomi</taxon>
        <taxon>Archelosauria</taxon>
        <taxon>Archosauria</taxon>
        <taxon>Dinosauria</taxon>
        <taxon>Saurischia</taxon>
        <taxon>Theropoda</taxon>
        <taxon>Coelurosauria</taxon>
        <taxon>Aves</taxon>
        <taxon>Neognathae</taxon>
        <taxon>Galloanserae</taxon>
        <taxon>Anseriformes</taxon>
        <taxon>Anatidae</taxon>
        <taxon>Tadorninae</taxon>
        <taxon>Chloephaga</taxon>
    </lineage>
</organism>
<name>HBB_CHLME</name>
<comment type="function">
    <text>Involved in oxygen transport from the lung to the various peripheral tissues.</text>
</comment>
<comment type="subunit">
    <text>Heterotetramer of two alpha chains and two beta chains.</text>
</comment>
<comment type="tissue specificity">
    <text>Red blood cells.</text>
</comment>
<comment type="similarity">
    <text evidence="1">Belongs to the globin family.</text>
</comment>